<sequence>MAHSTVMFRDVAVGFSQEEWECLSAYERDLYRDVMLENYSHLVSLAGCSISKPDVITLLEQGKEPWMIVRAEKRRWSRDLESRYSSNGLLPEKNTYEINLSPWEIMGRIQRRGPEDSLLGKDFEYKIYEEQENSHRVYFRHVIKTTSGKRPRYRKRTPVSLYQKTPNGEKPYECGECGKAFKVRQQLTFHQRIHTGEKPYECKECGKAFRQCAHLSRHQRIHASDKLYECKKCAKIFTCSSDLRGHQRSHVGEKPYDCKECGKAFRVRGQLMLHQRIHTGEKPYACTECGKSFRQVAHLTRHQRLNSGSSRHECKECGRAFLCSTGLRLHHKLHTGEKPYDCKECGKAFRVRQQLTLHERIHTGEKPFDCKECGKTFSRGYHLTLHQRIHTGEKPYECKECRKFFRRYSELISHQGIHIGEKPYDCKECGKAFRLFSQLTQHQSIHFGEKPYKCMECEKTFRLLSQLTQHQSIHTGEKPYDCKECGKAFRLHSSLIQHQRIHSGEKPYKCTECKKAFRQHSHLTYHQRIHKNL</sequence>
<keyword id="KW-0238">DNA-binding</keyword>
<keyword id="KW-1017">Isopeptide bond</keyword>
<keyword id="KW-0479">Metal-binding</keyword>
<keyword id="KW-0488">Methylation</keyword>
<keyword id="KW-0539">Nucleus</keyword>
<keyword id="KW-1185">Reference proteome</keyword>
<keyword id="KW-0677">Repeat</keyword>
<keyword id="KW-0804">Transcription</keyword>
<keyword id="KW-0805">Transcription regulation</keyword>
<keyword id="KW-0832">Ubl conjugation</keyword>
<keyword id="KW-0862">Zinc</keyword>
<keyword id="KW-0863">Zinc-finger</keyword>
<reference key="1">
    <citation type="journal article" date="1994" name="Mamm. Genome">
        <title>Zfp-30, a KRAB domain containing zinc finger protein gene, maps to mouse chromosome 7.</title>
        <authorList>
            <person name="Denny P."/>
            <person name="Ashworth A."/>
        </authorList>
    </citation>
    <scope>NUCLEOTIDE SEQUENCE [MRNA]</scope>
    <source>
        <strain>C57BL/6J</strain>
    </source>
</reference>
<reference key="2">
    <citation type="journal article" date="2005" name="Science">
        <title>The transcriptional landscape of the mammalian genome.</title>
        <authorList>
            <person name="Carninci P."/>
            <person name="Kasukawa T."/>
            <person name="Katayama S."/>
            <person name="Gough J."/>
            <person name="Frith M.C."/>
            <person name="Maeda N."/>
            <person name="Oyama R."/>
            <person name="Ravasi T."/>
            <person name="Lenhard B."/>
            <person name="Wells C."/>
            <person name="Kodzius R."/>
            <person name="Shimokawa K."/>
            <person name="Bajic V.B."/>
            <person name="Brenner S.E."/>
            <person name="Batalov S."/>
            <person name="Forrest A.R."/>
            <person name="Zavolan M."/>
            <person name="Davis M.J."/>
            <person name="Wilming L.G."/>
            <person name="Aidinis V."/>
            <person name="Allen J.E."/>
            <person name="Ambesi-Impiombato A."/>
            <person name="Apweiler R."/>
            <person name="Aturaliya R.N."/>
            <person name="Bailey T.L."/>
            <person name="Bansal M."/>
            <person name="Baxter L."/>
            <person name="Beisel K.W."/>
            <person name="Bersano T."/>
            <person name="Bono H."/>
            <person name="Chalk A.M."/>
            <person name="Chiu K.P."/>
            <person name="Choudhary V."/>
            <person name="Christoffels A."/>
            <person name="Clutterbuck D.R."/>
            <person name="Crowe M.L."/>
            <person name="Dalla E."/>
            <person name="Dalrymple B.P."/>
            <person name="de Bono B."/>
            <person name="Della Gatta G."/>
            <person name="di Bernardo D."/>
            <person name="Down T."/>
            <person name="Engstrom P."/>
            <person name="Fagiolini M."/>
            <person name="Faulkner G."/>
            <person name="Fletcher C.F."/>
            <person name="Fukushima T."/>
            <person name="Furuno M."/>
            <person name="Futaki S."/>
            <person name="Gariboldi M."/>
            <person name="Georgii-Hemming P."/>
            <person name="Gingeras T.R."/>
            <person name="Gojobori T."/>
            <person name="Green R.E."/>
            <person name="Gustincich S."/>
            <person name="Harbers M."/>
            <person name="Hayashi Y."/>
            <person name="Hensch T.K."/>
            <person name="Hirokawa N."/>
            <person name="Hill D."/>
            <person name="Huminiecki L."/>
            <person name="Iacono M."/>
            <person name="Ikeo K."/>
            <person name="Iwama A."/>
            <person name="Ishikawa T."/>
            <person name="Jakt M."/>
            <person name="Kanapin A."/>
            <person name="Katoh M."/>
            <person name="Kawasawa Y."/>
            <person name="Kelso J."/>
            <person name="Kitamura H."/>
            <person name="Kitano H."/>
            <person name="Kollias G."/>
            <person name="Krishnan S.P."/>
            <person name="Kruger A."/>
            <person name="Kummerfeld S.K."/>
            <person name="Kurochkin I.V."/>
            <person name="Lareau L.F."/>
            <person name="Lazarevic D."/>
            <person name="Lipovich L."/>
            <person name="Liu J."/>
            <person name="Liuni S."/>
            <person name="McWilliam S."/>
            <person name="Madan Babu M."/>
            <person name="Madera M."/>
            <person name="Marchionni L."/>
            <person name="Matsuda H."/>
            <person name="Matsuzawa S."/>
            <person name="Miki H."/>
            <person name="Mignone F."/>
            <person name="Miyake S."/>
            <person name="Morris K."/>
            <person name="Mottagui-Tabar S."/>
            <person name="Mulder N."/>
            <person name="Nakano N."/>
            <person name="Nakauchi H."/>
            <person name="Ng P."/>
            <person name="Nilsson R."/>
            <person name="Nishiguchi S."/>
            <person name="Nishikawa S."/>
            <person name="Nori F."/>
            <person name="Ohara O."/>
            <person name="Okazaki Y."/>
            <person name="Orlando V."/>
            <person name="Pang K.C."/>
            <person name="Pavan W.J."/>
            <person name="Pavesi G."/>
            <person name="Pesole G."/>
            <person name="Petrovsky N."/>
            <person name="Piazza S."/>
            <person name="Reed J."/>
            <person name="Reid J.F."/>
            <person name="Ring B.Z."/>
            <person name="Ringwald M."/>
            <person name="Rost B."/>
            <person name="Ruan Y."/>
            <person name="Salzberg S.L."/>
            <person name="Sandelin A."/>
            <person name="Schneider C."/>
            <person name="Schoenbach C."/>
            <person name="Sekiguchi K."/>
            <person name="Semple C.A."/>
            <person name="Seno S."/>
            <person name="Sessa L."/>
            <person name="Sheng Y."/>
            <person name="Shibata Y."/>
            <person name="Shimada H."/>
            <person name="Shimada K."/>
            <person name="Silva D."/>
            <person name="Sinclair B."/>
            <person name="Sperling S."/>
            <person name="Stupka E."/>
            <person name="Sugiura K."/>
            <person name="Sultana R."/>
            <person name="Takenaka Y."/>
            <person name="Taki K."/>
            <person name="Tammoja K."/>
            <person name="Tan S.L."/>
            <person name="Tang S."/>
            <person name="Taylor M.S."/>
            <person name="Tegner J."/>
            <person name="Teichmann S.A."/>
            <person name="Ueda H.R."/>
            <person name="van Nimwegen E."/>
            <person name="Verardo R."/>
            <person name="Wei C.L."/>
            <person name="Yagi K."/>
            <person name="Yamanishi H."/>
            <person name="Zabarovsky E."/>
            <person name="Zhu S."/>
            <person name="Zimmer A."/>
            <person name="Hide W."/>
            <person name="Bult C."/>
            <person name="Grimmond S.M."/>
            <person name="Teasdale R.D."/>
            <person name="Liu E.T."/>
            <person name="Brusic V."/>
            <person name="Quackenbush J."/>
            <person name="Wahlestedt C."/>
            <person name="Mattick J.S."/>
            <person name="Hume D.A."/>
            <person name="Kai C."/>
            <person name="Sasaki D."/>
            <person name="Tomaru Y."/>
            <person name="Fukuda S."/>
            <person name="Kanamori-Katayama M."/>
            <person name="Suzuki M."/>
            <person name="Aoki J."/>
            <person name="Arakawa T."/>
            <person name="Iida J."/>
            <person name="Imamura K."/>
            <person name="Itoh M."/>
            <person name="Kato T."/>
            <person name="Kawaji H."/>
            <person name="Kawagashira N."/>
            <person name="Kawashima T."/>
            <person name="Kojima M."/>
            <person name="Kondo S."/>
            <person name="Konno H."/>
            <person name="Nakano K."/>
            <person name="Ninomiya N."/>
            <person name="Nishio T."/>
            <person name="Okada M."/>
            <person name="Plessy C."/>
            <person name="Shibata K."/>
            <person name="Shiraki T."/>
            <person name="Suzuki S."/>
            <person name="Tagami M."/>
            <person name="Waki K."/>
            <person name="Watahiki A."/>
            <person name="Okamura-Oho Y."/>
            <person name="Suzuki H."/>
            <person name="Kawai J."/>
            <person name="Hayashizaki Y."/>
        </authorList>
    </citation>
    <scope>NUCLEOTIDE SEQUENCE [LARGE SCALE MRNA]</scope>
    <source>
        <strain>C57BL/6J</strain>
        <tissue>Head</tissue>
    </source>
</reference>
<reference key="3">
    <citation type="journal article" date="2014" name="Mol. Cell. Proteomics">
        <title>Immunoaffinity enrichment and mass spectrometry analysis of protein methylation.</title>
        <authorList>
            <person name="Guo A."/>
            <person name="Gu H."/>
            <person name="Zhou J."/>
            <person name="Mulhern D."/>
            <person name="Wang Y."/>
            <person name="Lee K.A."/>
            <person name="Yang V."/>
            <person name="Aguiar M."/>
            <person name="Kornhauser J."/>
            <person name="Jia X."/>
            <person name="Ren J."/>
            <person name="Beausoleil S.A."/>
            <person name="Silva J.C."/>
            <person name="Vemulapalli V."/>
            <person name="Bedford M.T."/>
            <person name="Comb M.J."/>
        </authorList>
    </citation>
    <scope>METHYLATION [LARGE SCALE ANALYSIS] AT ARG-75</scope>
    <scope>IDENTIFICATION BY MASS SPECTROMETRY [LARGE SCALE ANALYSIS]</scope>
    <source>
        <tissue>Brain</tissue>
    </source>
</reference>
<evidence type="ECO:0000250" key="1">
    <source>
        <dbReference type="UniProtKB" id="Q9Y2G7"/>
    </source>
</evidence>
<evidence type="ECO:0000255" key="2">
    <source>
        <dbReference type="PROSITE-ProRule" id="PRU00042"/>
    </source>
</evidence>
<evidence type="ECO:0000255" key="3">
    <source>
        <dbReference type="PROSITE-ProRule" id="PRU00119"/>
    </source>
</evidence>
<evidence type="ECO:0000305" key="4"/>
<evidence type="ECO:0007744" key="5">
    <source>
    </source>
</evidence>
<protein>
    <recommendedName>
        <fullName>Zinc finger protein 30</fullName>
        <shortName>Zfp-30</shortName>
    </recommendedName>
</protein>
<name>ZFP30_MOUSE</name>
<accession>Q60585</accession>
<accession>Q9CRV9</accession>
<organism>
    <name type="scientific">Mus musculus</name>
    <name type="common">Mouse</name>
    <dbReference type="NCBI Taxonomy" id="10090"/>
    <lineage>
        <taxon>Eukaryota</taxon>
        <taxon>Metazoa</taxon>
        <taxon>Chordata</taxon>
        <taxon>Craniata</taxon>
        <taxon>Vertebrata</taxon>
        <taxon>Euteleostomi</taxon>
        <taxon>Mammalia</taxon>
        <taxon>Eutheria</taxon>
        <taxon>Euarchontoglires</taxon>
        <taxon>Glires</taxon>
        <taxon>Rodentia</taxon>
        <taxon>Myomorpha</taxon>
        <taxon>Muroidea</taxon>
        <taxon>Muridae</taxon>
        <taxon>Murinae</taxon>
        <taxon>Mus</taxon>
        <taxon>Mus</taxon>
    </lineage>
</organism>
<dbReference type="EMBL" id="Z30174">
    <property type="protein sequence ID" value="CAA82913.1"/>
    <property type="status" value="ALT_INIT"/>
    <property type="molecule type" value="mRNA"/>
</dbReference>
<dbReference type="EMBL" id="AK014064">
    <property type="protein sequence ID" value="BAB29138.2"/>
    <property type="molecule type" value="mRNA"/>
</dbReference>
<dbReference type="PIR" id="I48208">
    <property type="entry name" value="S42077"/>
</dbReference>
<dbReference type="RefSeq" id="NP_038733.1">
    <property type="nucleotide sequence ID" value="NM_013705.1"/>
</dbReference>
<dbReference type="SMR" id="Q60585"/>
<dbReference type="BioGRID" id="204656">
    <property type="interactions" value="1"/>
</dbReference>
<dbReference type="FunCoup" id="Q60585">
    <property type="interactions" value="1"/>
</dbReference>
<dbReference type="IntAct" id="Q60585">
    <property type="interactions" value="1"/>
</dbReference>
<dbReference type="STRING" id="10090.ENSMUSP00000032803"/>
<dbReference type="iPTMnet" id="Q60585"/>
<dbReference type="PhosphoSitePlus" id="Q60585"/>
<dbReference type="PaxDb" id="10090-ENSMUSP00000032803"/>
<dbReference type="ProteomicsDB" id="275146"/>
<dbReference type="DNASU" id="22693"/>
<dbReference type="GeneID" id="22693"/>
<dbReference type="KEGG" id="mmu:22693"/>
<dbReference type="UCSC" id="uc009gcc.1">
    <property type="organism name" value="mouse"/>
</dbReference>
<dbReference type="AGR" id="MGI:99178"/>
<dbReference type="CTD" id="22835"/>
<dbReference type="MGI" id="MGI:99178">
    <property type="gene designation" value="Zfp30"/>
</dbReference>
<dbReference type="eggNOG" id="KOG1721">
    <property type="taxonomic scope" value="Eukaryota"/>
</dbReference>
<dbReference type="InParanoid" id="Q60585"/>
<dbReference type="OrthoDB" id="9411774at2759"/>
<dbReference type="Reactome" id="R-MMU-212436">
    <property type="pathway name" value="Generic Transcription Pathway"/>
</dbReference>
<dbReference type="BioGRID-ORCS" id="22693">
    <property type="hits" value="1 hit in 78 CRISPR screens"/>
</dbReference>
<dbReference type="PRO" id="PR:Q60585"/>
<dbReference type="Proteomes" id="UP000000589">
    <property type="component" value="Unplaced"/>
</dbReference>
<dbReference type="RNAct" id="Q60585">
    <property type="molecule type" value="protein"/>
</dbReference>
<dbReference type="GO" id="GO:0005634">
    <property type="term" value="C:nucleus"/>
    <property type="evidence" value="ECO:0007669"/>
    <property type="project" value="UniProtKB-SubCell"/>
</dbReference>
<dbReference type="GO" id="GO:0003677">
    <property type="term" value="F:DNA binding"/>
    <property type="evidence" value="ECO:0007669"/>
    <property type="project" value="UniProtKB-KW"/>
</dbReference>
<dbReference type="GO" id="GO:0008270">
    <property type="term" value="F:zinc ion binding"/>
    <property type="evidence" value="ECO:0007669"/>
    <property type="project" value="UniProtKB-KW"/>
</dbReference>
<dbReference type="GO" id="GO:0006355">
    <property type="term" value="P:regulation of DNA-templated transcription"/>
    <property type="evidence" value="ECO:0007669"/>
    <property type="project" value="InterPro"/>
</dbReference>
<dbReference type="CDD" id="cd07765">
    <property type="entry name" value="KRAB_A-box"/>
    <property type="match status" value="1"/>
</dbReference>
<dbReference type="FunFam" id="3.30.160.60:FF:000020">
    <property type="entry name" value="Zinc finger protein 14 homolog"/>
    <property type="match status" value="5"/>
</dbReference>
<dbReference type="FunFam" id="3.30.160.60:FF:000434">
    <property type="entry name" value="zinc finger protein 30 homolog"/>
    <property type="match status" value="1"/>
</dbReference>
<dbReference type="FunFam" id="3.30.160.60:FF:001498">
    <property type="entry name" value="Zinc finger protein 404"/>
    <property type="match status" value="1"/>
</dbReference>
<dbReference type="FunFam" id="3.30.160.60:FF:002254">
    <property type="entry name" value="Zinc finger protein 540"/>
    <property type="match status" value="1"/>
</dbReference>
<dbReference type="FunFam" id="3.30.160.60:FF:000052">
    <property type="entry name" value="zinc finger protein 546 isoform X1"/>
    <property type="match status" value="1"/>
</dbReference>
<dbReference type="FunFam" id="3.30.160.60:FF:001270">
    <property type="entry name" value="zinc finger protein 583 isoform X1"/>
    <property type="match status" value="1"/>
</dbReference>
<dbReference type="FunFam" id="3.30.160.60:FF:002355">
    <property type="entry name" value="Zinc finger protein 623"/>
    <property type="match status" value="1"/>
</dbReference>
<dbReference type="FunFam" id="3.30.160.60:FF:000070">
    <property type="entry name" value="zinc finger protein 689 isoform X1"/>
    <property type="match status" value="1"/>
</dbReference>
<dbReference type="Gene3D" id="6.10.140.140">
    <property type="match status" value="1"/>
</dbReference>
<dbReference type="Gene3D" id="3.30.160.60">
    <property type="entry name" value="Classic Zinc Finger"/>
    <property type="match status" value="13"/>
</dbReference>
<dbReference type="InterPro" id="IPR001909">
    <property type="entry name" value="KRAB"/>
</dbReference>
<dbReference type="InterPro" id="IPR036051">
    <property type="entry name" value="KRAB_dom_sf"/>
</dbReference>
<dbReference type="InterPro" id="IPR036236">
    <property type="entry name" value="Znf_C2H2_sf"/>
</dbReference>
<dbReference type="InterPro" id="IPR013087">
    <property type="entry name" value="Znf_C2H2_type"/>
</dbReference>
<dbReference type="PANTHER" id="PTHR24399:SF75">
    <property type="entry name" value="ZFP14 ZINC FINGER PROTEIN-RELATED"/>
    <property type="match status" value="1"/>
</dbReference>
<dbReference type="PANTHER" id="PTHR24399">
    <property type="entry name" value="ZINC FINGER AND BTB DOMAIN-CONTAINING"/>
    <property type="match status" value="1"/>
</dbReference>
<dbReference type="Pfam" id="PF01352">
    <property type="entry name" value="KRAB"/>
    <property type="match status" value="1"/>
</dbReference>
<dbReference type="Pfam" id="PF00096">
    <property type="entry name" value="zf-C2H2"/>
    <property type="match status" value="11"/>
</dbReference>
<dbReference type="SMART" id="SM00349">
    <property type="entry name" value="KRAB"/>
    <property type="match status" value="1"/>
</dbReference>
<dbReference type="SMART" id="SM00355">
    <property type="entry name" value="ZnF_C2H2"/>
    <property type="match status" value="13"/>
</dbReference>
<dbReference type="SUPFAM" id="SSF57667">
    <property type="entry name" value="beta-beta-alpha zinc fingers"/>
    <property type="match status" value="7"/>
</dbReference>
<dbReference type="SUPFAM" id="SSF109640">
    <property type="entry name" value="KRAB domain (Kruppel-associated box)"/>
    <property type="match status" value="1"/>
</dbReference>
<dbReference type="PROSITE" id="PS50805">
    <property type="entry name" value="KRAB"/>
    <property type="match status" value="1"/>
</dbReference>
<dbReference type="PROSITE" id="PS00028">
    <property type="entry name" value="ZINC_FINGER_C2H2_1"/>
    <property type="match status" value="12"/>
</dbReference>
<dbReference type="PROSITE" id="PS50157">
    <property type="entry name" value="ZINC_FINGER_C2H2_2"/>
    <property type="match status" value="13"/>
</dbReference>
<gene>
    <name type="primary">Zfp30</name>
</gene>
<comment type="function">
    <text>May be involved in transcriptional regulation.</text>
</comment>
<comment type="subcellular location">
    <subcellularLocation>
        <location evidence="4">Nucleus</location>
    </subcellularLocation>
</comment>
<comment type="similarity">
    <text evidence="4">Belongs to the krueppel C2H2-type zinc-finger protein family.</text>
</comment>
<comment type="sequence caution" evidence="4">
    <conflict type="erroneous initiation">
        <sequence resource="EMBL-CDS" id="CAA82913"/>
    </conflict>
</comment>
<proteinExistence type="evidence at protein level"/>
<feature type="chain" id="PRO_0000047292" description="Zinc finger protein 30">
    <location>
        <begin position="1"/>
        <end position="533"/>
    </location>
</feature>
<feature type="domain" description="KRAB" evidence="3">
    <location>
        <begin position="6"/>
        <end position="78"/>
    </location>
</feature>
<feature type="zinc finger region" description="C2H2-type 1" evidence="2">
    <location>
        <begin position="172"/>
        <end position="194"/>
    </location>
</feature>
<feature type="zinc finger region" description="C2H2-type 2" evidence="2">
    <location>
        <begin position="200"/>
        <end position="222"/>
    </location>
</feature>
<feature type="zinc finger region" description="C2H2-type 3" evidence="2">
    <location>
        <begin position="228"/>
        <end position="250"/>
    </location>
</feature>
<feature type="zinc finger region" description="C2H2-type 4" evidence="2">
    <location>
        <begin position="256"/>
        <end position="278"/>
    </location>
</feature>
<feature type="zinc finger region" description="C2H2-type 5; degenerate" evidence="2">
    <location>
        <begin position="284"/>
        <end position="306"/>
    </location>
</feature>
<feature type="zinc finger region" description="C2H2-type 6" evidence="2">
    <location>
        <begin position="312"/>
        <end position="334"/>
    </location>
</feature>
<feature type="zinc finger region" description="C2H2-type 7" evidence="2">
    <location>
        <begin position="340"/>
        <end position="362"/>
    </location>
</feature>
<feature type="zinc finger region" description="C2H2-type 8" evidence="2">
    <location>
        <begin position="368"/>
        <end position="390"/>
    </location>
</feature>
<feature type="zinc finger region" description="C2H2-type 9" evidence="2">
    <location>
        <begin position="396"/>
        <end position="418"/>
    </location>
</feature>
<feature type="zinc finger region" description="C2H2-type 10" evidence="2">
    <location>
        <begin position="424"/>
        <end position="446"/>
    </location>
</feature>
<feature type="zinc finger region" description="C2H2-type 11" evidence="2">
    <location>
        <begin position="452"/>
        <end position="474"/>
    </location>
</feature>
<feature type="zinc finger region" description="C2H2-type 12" evidence="2">
    <location>
        <begin position="480"/>
        <end position="502"/>
    </location>
</feature>
<feature type="zinc finger region" description="C2H2-type 13" evidence="2">
    <location>
        <begin position="508"/>
        <end position="530"/>
    </location>
</feature>
<feature type="modified residue" description="Asymmetric dimethylarginine" evidence="5">
    <location>
        <position position="75"/>
    </location>
</feature>
<feature type="cross-link" description="Glycyl lysine isopeptide (Lys-Gly) (interchain with G-Cter in SUMO2)" evidence="1">
    <location>
        <position position="155"/>
    </location>
</feature>